<protein>
    <recommendedName>
        <fullName evidence="1">L-rhamnose mutarotase</fullName>
        <ecNumber evidence="1">5.1.3.32</ecNumber>
    </recommendedName>
    <alternativeName>
        <fullName evidence="1">Rhamnose 1-epimerase</fullName>
    </alternativeName>
    <alternativeName>
        <fullName evidence="1">Type-3 mutarotase</fullName>
    </alternativeName>
</protein>
<proteinExistence type="inferred from homology"/>
<evidence type="ECO:0000255" key="1">
    <source>
        <dbReference type="HAMAP-Rule" id="MF_01663"/>
    </source>
</evidence>
<name>RHAM_PARP8</name>
<reference key="1">
    <citation type="journal article" date="2014" name="Stand. Genomic Sci.">
        <title>Complete genome sequence of Burkholderia phymatum STM815(T), a broad host range and efficient nitrogen-fixing symbiont of Mimosa species.</title>
        <authorList>
            <person name="Moulin L."/>
            <person name="Klonowska A."/>
            <person name="Caroline B."/>
            <person name="Booth K."/>
            <person name="Vriezen J.A."/>
            <person name="Melkonian R."/>
            <person name="James E.K."/>
            <person name="Young J.P."/>
            <person name="Bena G."/>
            <person name="Hauser L."/>
            <person name="Land M."/>
            <person name="Kyrpides N."/>
            <person name="Bruce D."/>
            <person name="Chain P."/>
            <person name="Copeland A."/>
            <person name="Pitluck S."/>
            <person name="Woyke T."/>
            <person name="Lizotte-Waniewski M."/>
            <person name="Bristow J."/>
            <person name="Riley M."/>
        </authorList>
    </citation>
    <scope>NUCLEOTIDE SEQUENCE [LARGE SCALE GENOMIC DNA]</scope>
    <source>
        <strain>DSM 17167 / CIP 108236 / LMG 21445 / STM815</strain>
    </source>
</reference>
<keyword id="KW-0119">Carbohydrate metabolism</keyword>
<keyword id="KW-0963">Cytoplasm</keyword>
<keyword id="KW-0413">Isomerase</keyword>
<keyword id="KW-1185">Reference proteome</keyword>
<keyword id="KW-0684">Rhamnose metabolism</keyword>
<organism>
    <name type="scientific">Paraburkholderia phymatum (strain DSM 17167 / CIP 108236 / LMG 21445 / STM815)</name>
    <name type="common">Burkholderia phymatum</name>
    <dbReference type="NCBI Taxonomy" id="391038"/>
    <lineage>
        <taxon>Bacteria</taxon>
        <taxon>Pseudomonadati</taxon>
        <taxon>Pseudomonadota</taxon>
        <taxon>Betaproteobacteria</taxon>
        <taxon>Burkholderiales</taxon>
        <taxon>Burkholderiaceae</taxon>
        <taxon>Paraburkholderia</taxon>
    </lineage>
</organism>
<sequence>MDTIAFRMVLNRGMRDEYERRHREIWPELVSKLHNAGVRDYRIFLDDDTHHLFAVLTRTADHSMERLPELAVMRKWWDYMADIMQTAPDRTPLQQALIPLFELQHPSN</sequence>
<comment type="function">
    <text evidence="1">Involved in the anomeric conversion of L-rhamnose.</text>
</comment>
<comment type="catalytic activity">
    <reaction evidence="1">
        <text>alpha-L-rhamnose = beta-L-rhamnose</text>
        <dbReference type="Rhea" id="RHEA:25584"/>
        <dbReference type="ChEBI" id="CHEBI:27586"/>
        <dbReference type="ChEBI" id="CHEBI:27907"/>
        <dbReference type="EC" id="5.1.3.32"/>
    </reaction>
</comment>
<comment type="pathway">
    <text evidence="1">Carbohydrate metabolism; L-rhamnose metabolism.</text>
</comment>
<comment type="subunit">
    <text evidence="1">Homodimer.</text>
</comment>
<comment type="subcellular location">
    <subcellularLocation>
        <location evidence="1">Cytoplasm</location>
    </subcellularLocation>
</comment>
<comment type="similarity">
    <text evidence="1">Belongs to the rhamnose mutarotase family.</text>
</comment>
<dbReference type="EC" id="5.1.3.32" evidence="1"/>
<dbReference type="EMBL" id="CP001044">
    <property type="protein sequence ID" value="ACC72618.1"/>
    <property type="molecule type" value="Genomic_DNA"/>
</dbReference>
<dbReference type="RefSeq" id="WP_012402791.1">
    <property type="nucleotide sequence ID" value="NC_010623.1"/>
</dbReference>
<dbReference type="SMR" id="B2JLI5"/>
<dbReference type="STRING" id="391038.Bphy_3465"/>
<dbReference type="KEGG" id="bph:Bphy_3465"/>
<dbReference type="eggNOG" id="COG3254">
    <property type="taxonomic scope" value="Bacteria"/>
</dbReference>
<dbReference type="HOGENOM" id="CLU_100689_2_0_4"/>
<dbReference type="OrthoDB" id="9799608at2"/>
<dbReference type="UniPathway" id="UPA00125"/>
<dbReference type="Proteomes" id="UP000001192">
    <property type="component" value="Chromosome 2"/>
</dbReference>
<dbReference type="GO" id="GO:0005737">
    <property type="term" value="C:cytoplasm"/>
    <property type="evidence" value="ECO:0007669"/>
    <property type="project" value="UniProtKB-SubCell"/>
</dbReference>
<dbReference type="GO" id="GO:0062192">
    <property type="term" value="F:L-rhamnose mutarotase activity"/>
    <property type="evidence" value="ECO:0007669"/>
    <property type="project" value="UniProtKB-EC"/>
</dbReference>
<dbReference type="GO" id="GO:0019301">
    <property type="term" value="P:rhamnose catabolic process"/>
    <property type="evidence" value="ECO:0007669"/>
    <property type="project" value="TreeGrafter"/>
</dbReference>
<dbReference type="Gene3D" id="3.30.70.100">
    <property type="match status" value="1"/>
</dbReference>
<dbReference type="HAMAP" id="MF_01663">
    <property type="entry name" value="L_rham_rotase"/>
    <property type="match status" value="1"/>
</dbReference>
<dbReference type="InterPro" id="IPR011008">
    <property type="entry name" value="Dimeric_a/b-barrel"/>
</dbReference>
<dbReference type="InterPro" id="IPR013448">
    <property type="entry name" value="L-rhamnose_mutarotase"/>
</dbReference>
<dbReference type="InterPro" id="IPR008000">
    <property type="entry name" value="Rham/fucose_mutarotase"/>
</dbReference>
<dbReference type="PANTHER" id="PTHR34389">
    <property type="entry name" value="L-RHAMNOSE MUTAROTASE"/>
    <property type="match status" value="1"/>
</dbReference>
<dbReference type="PANTHER" id="PTHR34389:SF2">
    <property type="entry name" value="L-RHAMNOSE MUTAROTASE"/>
    <property type="match status" value="1"/>
</dbReference>
<dbReference type="Pfam" id="PF05336">
    <property type="entry name" value="rhaM"/>
    <property type="match status" value="1"/>
</dbReference>
<dbReference type="SUPFAM" id="SSF54909">
    <property type="entry name" value="Dimeric alpha+beta barrel"/>
    <property type="match status" value="1"/>
</dbReference>
<accession>B2JLI5</accession>
<gene>
    <name evidence="1" type="primary">rhaM</name>
    <name type="ordered locus">Bphy_3465</name>
</gene>
<feature type="chain" id="PRO_1000187211" description="L-rhamnose mutarotase">
    <location>
        <begin position="1"/>
        <end position="108"/>
    </location>
</feature>
<feature type="active site" description="Proton donor" evidence="1">
    <location>
        <position position="22"/>
    </location>
</feature>
<feature type="binding site" evidence="1">
    <location>
        <position position="18"/>
    </location>
    <ligand>
        <name>substrate</name>
    </ligand>
</feature>
<feature type="binding site" evidence="1">
    <location>
        <position position="41"/>
    </location>
    <ligand>
        <name>substrate</name>
    </ligand>
</feature>
<feature type="binding site" evidence="1">
    <location>
        <begin position="76"/>
        <end position="77"/>
    </location>
    <ligand>
        <name>substrate</name>
    </ligand>
</feature>